<accession>Q4I6A4</accession>
<accession>A0A0E0SDI1</accession>
<accession>I1RSW8</accession>
<accession>V6RNJ9</accession>
<comment type="function">
    <text evidence="3">Catalytic component of the histone acetylase B (HAT-B) complex. Acetylates Lys-12 of histone H4 which is required for telomeric silencing. Has intrinsic substrate specificity that modifies lysine in recognition sequence GXGKXG. Involved in DNA double-strand break repair.</text>
</comment>
<comment type="catalytic activity">
    <reaction evidence="3">
        <text>L-lysyl-[protein] + acetyl-CoA = N(6)-acetyl-L-lysyl-[protein] + CoA + H(+)</text>
        <dbReference type="Rhea" id="RHEA:45948"/>
        <dbReference type="Rhea" id="RHEA-COMP:9752"/>
        <dbReference type="Rhea" id="RHEA-COMP:10731"/>
        <dbReference type="ChEBI" id="CHEBI:15378"/>
        <dbReference type="ChEBI" id="CHEBI:29969"/>
        <dbReference type="ChEBI" id="CHEBI:57287"/>
        <dbReference type="ChEBI" id="CHEBI:57288"/>
        <dbReference type="ChEBI" id="CHEBI:61930"/>
        <dbReference type="EC" id="2.3.1.48"/>
    </reaction>
</comment>
<comment type="subunit">
    <text evidence="3">Component of the HAT-B complex composed of at least HAT1 and HAT2. The HAT-B complex binds to histone H4 tail (By similarity).</text>
</comment>
<comment type="subcellular location">
    <subcellularLocation>
        <location evidence="1">Cytoplasm</location>
    </subcellularLocation>
    <subcellularLocation>
        <location evidence="1">Nucleus</location>
    </subcellularLocation>
</comment>
<comment type="similarity">
    <text evidence="5">Belongs to the HAT1 family.</text>
</comment>
<reference key="1">
    <citation type="journal article" date="2007" name="Science">
        <title>The Fusarium graminearum genome reveals a link between localized polymorphism and pathogen specialization.</title>
        <authorList>
            <person name="Cuomo C.A."/>
            <person name="Gueldener U."/>
            <person name="Xu J.-R."/>
            <person name="Trail F."/>
            <person name="Turgeon B.G."/>
            <person name="Di Pietro A."/>
            <person name="Walton J.D."/>
            <person name="Ma L.-J."/>
            <person name="Baker S.E."/>
            <person name="Rep M."/>
            <person name="Adam G."/>
            <person name="Antoniw J."/>
            <person name="Baldwin T."/>
            <person name="Calvo S.E."/>
            <person name="Chang Y.-L."/>
            <person name="DeCaprio D."/>
            <person name="Gale L.R."/>
            <person name="Gnerre S."/>
            <person name="Goswami R.S."/>
            <person name="Hammond-Kosack K."/>
            <person name="Harris L.J."/>
            <person name="Hilburn K."/>
            <person name="Kennell J.C."/>
            <person name="Kroken S."/>
            <person name="Magnuson J.K."/>
            <person name="Mannhaupt G."/>
            <person name="Mauceli E.W."/>
            <person name="Mewes H.-W."/>
            <person name="Mitterbauer R."/>
            <person name="Muehlbauer G."/>
            <person name="Muensterkoetter M."/>
            <person name="Nelson D."/>
            <person name="O'Donnell K."/>
            <person name="Ouellet T."/>
            <person name="Qi W."/>
            <person name="Quesneville H."/>
            <person name="Roncero M.I.G."/>
            <person name="Seong K.-Y."/>
            <person name="Tetko I.V."/>
            <person name="Urban M."/>
            <person name="Waalwijk C."/>
            <person name="Ward T.J."/>
            <person name="Yao J."/>
            <person name="Birren B.W."/>
            <person name="Kistler H.C."/>
        </authorList>
    </citation>
    <scope>NUCLEOTIDE SEQUENCE [LARGE SCALE GENOMIC DNA]</scope>
    <source>
        <strain>ATCC MYA-4620 / CBS 123657 / FGSC 9075 / NRRL 31084 / PH-1</strain>
    </source>
</reference>
<reference key="2">
    <citation type="journal article" date="2010" name="Nature">
        <title>Comparative genomics reveals mobile pathogenicity chromosomes in Fusarium.</title>
        <authorList>
            <person name="Ma L.-J."/>
            <person name="van der Does H.C."/>
            <person name="Borkovich K.A."/>
            <person name="Coleman J.J."/>
            <person name="Daboussi M.-J."/>
            <person name="Di Pietro A."/>
            <person name="Dufresne M."/>
            <person name="Freitag M."/>
            <person name="Grabherr M."/>
            <person name="Henrissat B."/>
            <person name="Houterman P.M."/>
            <person name="Kang S."/>
            <person name="Shim W.-B."/>
            <person name="Woloshuk C."/>
            <person name="Xie X."/>
            <person name="Xu J.-R."/>
            <person name="Antoniw J."/>
            <person name="Baker S.E."/>
            <person name="Bluhm B.H."/>
            <person name="Breakspear A."/>
            <person name="Brown D.W."/>
            <person name="Butchko R.A.E."/>
            <person name="Chapman S."/>
            <person name="Coulson R."/>
            <person name="Coutinho P.M."/>
            <person name="Danchin E.G.J."/>
            <person name="Diener A."/>
            <person name="Gale L.R."/>
            <person name="Gardiner D.M."/>
            <person name="Goff S."/>
            <person name="Hammond-Kosack K.E."/>
            <person name="Hilburn K."/>
            <person name="Hua-Van A."/>
            <person name="Jonkers W."/>
            <person name="Kazan K."/>
            <person name="Kodira C.D."/>
            <person name="Koehrsen M."/>
            <person name="Kumar L."/>
            <person name="Lee Y.-H."/>
            <person name="Li L."/>
            <person name="Manners J.M."/>
            <person name="Miranda-Saavedra D."/>
            <person name="Mukherjee M."/>
            <person name="Park G."/>
            <person name="Park J."/>
            <person name="Park S.-Y."/>
            <person name="Proctor R.H."/>
            <person name="Regev A."/>
            <person name="Ruiz-Roldan M.C."/>
            <person name="Sain D."/>
            <person name="Sakthikumar S."/>
            <person name="Sykes S."/>
            <person name="Schwartz D.C."/>
            <person name="Turgeon B.G."/>
            <person name="Wapinski I."/>
            <person name="Yoder O."/>
            <person name="Young S."/>
            <person name="Zeng Q."/>
            <person name="Zhou S."/>
            <person name="Galagan J."/>
            <person name="Cuomo C.A."/>
            <person name="Kistler H.C."/>
            <person name="Rep M."/>
        </authorList>
    </citation>
    <scope>GENOME REANNOTATION</scope>
    <source>
        <strain>ATCC MYA-4620 / CBS 123657 / FGSC 9075 / NRRL 31084 / PH-1</strain>
    </source>
</reference>
<reference key="3">
    <citation type="journal article" date="2015" name="BMC Genomics">
        <title>The completed genome sequence of the pathogenic ascomycete fungus Fusarium graminearum.</title>
        <authorList>
            <person name="King R."/>
            <person name="Urban M."/>
            <person name="Hammond-Kosack M.C.U."/>
            <person name="Hassani-Pak K."/>
            <person name="Hammond-Kosack K.E."/>
        </authorList>
    </citation>
    <scope>NUCLEOTIDE SEQUENCE [LARGE SCALE GENOMIC DNA]</scope>
    <source>
        <strain>ATCC MYA-4620 / CBS 123657 / FGSC 9075 / NRRL 31084 / PH-1</strain>
    </source>
</reference>
<name>HAT1_GIBZE</name>
<proteinExistence type="inferred from homology"/>
<sequence length="477" mass="54380">MEDTTQWLSDASTAIHISLVSPSESGLQHVATFNPRHTYSIFGDDEKIFGYQDLKVNLRYRANDMRPHLNISYSKKSGTINELEPTDVAAILDEGNHLPKIAFAKARDFEESSKQLSDDWTPPGKLHTTFDSPEGQYEIWCGNLADPAVKQLNSRLQIFVPLFIEGGTYIGQDPDEDSAELDLSDADRWTFFSLYQKRKVGDKTAYVFVGYSTIYRFYYFQPPTPPASPQSDEWELPNGNMDLGELPCRTRLSQFIILPPFQGKGNGARLYKTIFEHYHKIPQTYEFTVEDPNEAFDDLRDICDLQFLRKMPEFNNLLVDTNIKIPKKGFLPKLIIGSSLLEEIRLRAKIAPRQFGRVLEMHLMSKLPVSVRPTMAIEDQPAATKADQHEAKVWGLIVKQRLYRHNKEVLSQIEPAERVEKLDDTLHGVGLEYARILAAVDRSDKYEGQTTASSKRKLDADEITEDLSNKKARVEDA</sequence>
<keyword id="KW-0012">Acyltransferase</keyword>
<keyword id="KW-0156">Chromatin regulator</keyword>
<keyword id="KW-0963">Cytoplasm</keyword>
<keyword id="KW-0227">DNA damage</keyword>
<keyword id="KW-0234">DNA repair</keyword>
<keyword id="KW-0539">Nucleus</keyword>
<keyword id="KW-1185">Reference proteome</keyword>
<keyword id="KW-0808">Transferase</keyword>
<gene>
    <name type="primary">HAT1</name>
    <name type="ORF">FGRRES_07254</name>
    <name type="ORF">FGSG_07254</name>
</gene>
<evidence type="ECO:0000250" key="1"/>
<evidence type="ECO:0000250" key="2">
    <source>
        <dbReference type="UniProtKB" id="O14929"/>
    </source>
</evidence>
<evidence type="ECO:0000250" key="3">
    <source>
        <dbReference type="UniProtKB" id="Q12341"/>
    </source>
</evidence>
<evidence type="ECO:0000256" key="4">
    <source>
        <dbReference type="SAM" id="MobiDB-lite"/>
    </source>
</evidence>
<evidence type="ECO:0000305" key="5"/>
<protein>
    <recommendedName>
        <fullName>Histone acetyltransferase type B catalytic subunit</fullName>
        <ecNumber evidence="3">2.3.1.48</ecNumber>
    </recommendedName>
</protein>
<dbReference type="EC" id="2.3.1.48" evidence="3"/>
<dbReference type="EMBL" id="DS231666">
    <property type="protein sequence ID" value="ESU13485.1"/>
    <property type="molecule type" value="Genomic_DNA"/>
</dbReference>
<dbReference type="EMBL" id="HG970335">
    <property type="protein sequence ID" value="CEF84494.1"/>
    <property type="molecule type" value="Genomic_DNA"/>
</dbReference>
<dbReference type="RefSeq" id="XP_011326992.1">
    <property type="nucleotide sequence ID" value="XM_011328690.1"/>
</dbReference>
<dbReference type="SMR" id="Q4I6A4"/>
<dbReference type="FunCoup" id="Q4I6A4">
    <property type="interactions" value="1165"/>
</dbReference>
<dbReference type="STRING" id="229533.Q4I6A4"/>
<dbReference type="GeneID" id="23554341"/>
<dbReference type="KEGG" id="fgr:FGSG_07254"/>
<dbReference type="VEuPathDB" id="FungiDB:FGRAMPH1_01G24355"/>
<dbReference type="eggNOG" id="KOG2696">
    <property type="taxonomic scope" value="Eukaryota"/>
</dbReference>
<dbReference type="HOGENOM" id="CLU_036024_2_1_1"/>
<dbReference type="InParanoid" id="Q4I6A4"/>
<dbReference type="OrthoDB" id="57543at110618"/>
<dbReference type="Proteomes" id="UP000070720">
    <property type="component" value="Chromosome 4"/>
</dbReference>
<dbReference type="GO" id="GO:0000781">
    <property type="term" value="C:chromosome, telomeric region"/>
    <property type="evidence" value="ECO:0007669"/>
    <property type="project" value="GOC"/>
</dbReference>
<dbReference type="GO" id="GO:0005737">
    <property type="term" value="C:cytoplasm"/>
    <property type="evidence" value="ECO:0007669"/>
    <property type="project" value="UniProtKB-SubCell"/>
</dbReference>
<dbReference type="GO" id="GO:0005634">
    <property type="term" value="C:nucleus"/>
    <property type="evidence" value="ECO:0007669"/>
    <property type="project" value="UniProtKB-SubCell"/>
</dbReference>
<dbReference type="GO" id="GO:0004402">
    <property type="term" value="F:histone acetyltransferase activity"/>
    <property type="evidence" value="ECO:0007669"/>
    <property type="project" value="UniProtKB-EC"/>
</dbReference>
<dbReference type="GO" id="GO:0042393">
    <property type="term" value="F:histone binding"/>
    <property type="evidence" value="ECO:0007669"/>
    <property type="project" value="InterPro"/>
</dbReference>
<dbReference type="GO" id="GO:0006281">
    <property type="term" value="P:DNA repair"/>
    <property type="evidence" value="ECO:0007669"/>
    <property type="project" value="UniProtKB-KW"/>
</dbReference>
<dbReference type="GO" id="GO:0031509">
    <property type="term" value="P:subtelomeric heterochromatin formation"/>
    <property type="evidence" value="ECO:0007669"/>
    <property type="project" value="InterPro"/>
</dbReference>
<dbReference type="Gene3D" id="1.10.10.390">
    <property type="match status" value="1"/>
</dbReference>
<dbReference type="Gene3D" id="3.40.630.30">
    <property type="match status" value="1"/>
</dbReference>
<dbReference type="Gene3D" id="3.90.360.10">
    <property type="entry name" value="Histone acetyl transferase 1 (HAT1), N-terminal domain"/>
    <property type="match status" value="1"/>
</dbReference>
<dbReference type="InterPro" id="IPR016181">
    <property type="entry name" value="Acyl_CoA_acyltransferase"/>
</dbReference>
<dbReference type="InterPro" id="IPR019467">
    <property type="entry name" value="Hat1_N"/>
</dbReference>
<dbReference type="InterPro" id="IPR037113">
    <property type="entry name" value="Hat1_N_sf"/>
</dbReference>
<dbReference type="InterPro" id="IPR017380">
    <property type="entry name" value="Hist_AcTrfase_B-typ_cat-su"/>
</dbReference>
<dbReference type="InterPro" id="IPR013523">
    <property type="entry name" value="Hist_AcTrfase_HAT1_C"/>
</dbReference>
<dbReference type="PANTHER" id="PTHR12046">
    <property type="entry name" value="HISTONE ACETYLTRANSFERASE TYPE B CATALYTIC SUBUNIT"/>
    <property type="match status" value="1"/>
</dbReference>
<dbReference type="Pfam" id="PF21184">
    <property type="entry name" value="HAT1_C_fung"/>
    <property type="match status" value="1"/>
</dbReference>
<dbReference type="Pfam" id="PF10394">
    <property type="entry name" value="Hat1_N"/>
    <property type="match status" value="1"/>
</dbReference>
<dbReference type="PIRSF" id="PIRSF038084">
    <property type="entry name" value="HAT-B_cat"/>
    <property type="match status" value="1"/>
</dbReference>
<dbReference type="SUPFAM" id="SSF55729">
    <property type="entry name" value="Acyl-CoA N-acyltransferases (Nat)"/>
    <property type="match status" value="1"/>
</dbReference>
<organism>
    <name type="scientific">Gibberella zeae (strain ATCC MYA-4620 / CBS 123657 / FGSC 9075 / NRRL 31084 / PH-1)</name>
    <name type="common">Wheat head blight fungus</name>
    <name type="synonym">Fusarium graminearum</name>
    <dbReference type="NCBI Taxonomy" id="229533"/>
    <lineage>
        <taxon>Eukaryota</taxon>
        <taxon>Fungi</taxon>
        <taxon>Dikarya</taxon>
        <taxon>Ascomycota</taxon>
        <taxon>Pezizomycotina</taxon>
        <taxon>Sordariomycetes</taxon>
        <taxon>Hypocreomycetidae</taxon>
        <taxon>Hypocreales</taxon>
        <taxon>Nectriaceae</taxon>
        <taxon>Fusarium</taxon>
    </lineage>
</organism>
<feature type="chain" id="PRO_0000227724" description="Histone acetyltransferase type B catalytic subunit">
    <location>
        <begin position="1"/>
        <end position="477"/>
    </location>
</feature>
<feature type="region of interest" description="Interaction with histone H4 N-terminus" evidence="3">
    <location>
        <begin position="44"/>
        <end position="46"/>
    </location>
</feature>
<feature type="region of interest" description="Interaction with histone H4 N-terminus" evidence="3">
    <location>
        <begin position="215"/>
        <end position="217"/>
    </location>
</feature>
<feature type="region of interest" description="Disordered" evidence="4">
    <location>
        <begin position="444"/>
        <end position="477"/>
    </location>
</feature>
<feature type="compositionally biased region" description="Basic and acidic residues" evidence="4">
    <location>
        <begin position="467"/>
        <end position="477"/>
    </location>
</feature>
<feature type="active site" description="Proton donor/acceptor" evidence="3">
    <location>
        <position position="290"/>
    </location>
</feature>
<feature type="binding site" evidence="3">
    <location>
        <begin position="255"/>
        <end position="257"/>
    </location>
    <ligand>
        <name>acetyl-CoA</name>
        <dbReference type="ChEBI" id="CHEBI:57288"/>
    </ligand>
</feature>
<feature type="binding site" evidence="3">
    <location>
        <begin position="262"/>
        <end position="268"/>
    </location>
    <ligand>
        <name>acetyl-CoA</name>
        <dbReference type="ChEBI" id="CHEBI:57288"/>
    </ligand>
</feature>
<feature type="site" description="Interaction with histone H4 N-terminus" evidence="2">
    <location>
        <position position="189"/>
    </location>
</feature>